<gene>
    <name type="ordered locus">CLL_A0562</name>
</gene>
<evidence type="ECO:0000255" key="1">
    <source>
        <dbReference type="PROSITE-ProRule" id="PRU01182"/>
    </source>
</evidence>
<evidence type="ECO:0000305" key="2"/>
<comment type="similarity">
    <text evidence="2">Belongs to the UPF0758 family.</text>
</comment>
<keyword id="KW-0378">Hydrolase</keyword>
<keyword id="KW-0479">Metal-binding</keyword>
<keyword id="KW-0482">Metalloprotease</keyword>
<keyword id="KW-0645">Protease</keyword>
<keyword id="KW-0862">Zinc</keyword>
<proteinExistence type="inferred from homology"/>
<accession>B2TK55</accession>
<name>Y562_CLOBB</name>
<feature type="chain" id="PRO_1000089805" description="UPF0758 protein CLL_A0562">
    <location>
        <begin position="1"/>
        <end position="229"/>
    </location>
</feature>
<feature type="domain" description="MPN" evidence="1">
    <location>
        <begin position="107"/>
        <end position="229"/>
    </location>
</feature>
<feature type="short sequence motif" description="JAMM motif" evidence="1">
    <location>
        <begin position="178"/>
        <end position="191"/>
    </location>
</feature>
<feature type="binding site" evidence="1">
    <location>
        <position position="178"/>
    </location>
    <ligand>
        <name>Zn(2+)</name>
        <dbReference type="ChEBI" id="CHEBI:29105"/>
        <note>catalytic</note>
    </ligand>
</feature>
<feature type="binding site" evidence="1">
    <location>
        <position position="180"/>
    </location>
    <ligand>
        <name>Zn(2+)</name>
        <dbReference type="ChEBI" id="CHEBI:29105"/>
        <note>catalytic</note>
    </ligand>
</feature>
<feature type="binding site" evidence="1">
    <location>
        <position position="191"/>
    </location>
    <ligand>
        <name>Zn(2+)</name>
        <dbReference type="ChEBI" id="CHEBI:29105"/>
        <note>catalytic</note>
    </ligand>
</feature>
<dbReference type="EMBL" id="CP001056">
    <property type="protein sequence ID" value="ACD22744.1"/>
    <property type="molecule type" value="Genomic_DNA"/>
</dbReference>
<dbReference type="SMR" id="B2TK55"/>
<dbReference type="KEGG" id="cbk:CLL_A0562"/>
<dbReference type="PATRIC" id="fig|935198.13.peg.509"/>
<dbReference type="HOGENOM" id="CLU_073529_0_2_9"/>
<dbReference type="Proteomes" id="UP000001195">
    <property type="component" value="Chromosome"/>
</dbReference>
<dbReference type="GO" id="GO:0046872">
    <property type="term" value="F:metal ion binding"/>
    <property type="evidence" value="ECO:0007669"/>
    <property type="project" value="UniProtKB-KW"/>
</dbReference>
<dbReference type="GO" id="GO:0008237">
    <property type="term" value="F:metallopeptidase activity"/>
    <property type="evidence" value="ECO:0007669"/>
    <property type="project" value="UniProtKB-KW"/>
</dbReference>
<dbReference type="GO" id="GO:0006508">
    <property type="term" value="P:proteolysis"/>
    <property type="evidence" value="ECO:0007669"/>
    <property type="project" value="UniProtKB-KW"/>
</dbReference>
<dbReference type="CDD" id="cd08071">
    <property type="entry name" value="MPN_DUF2466"/>
    <property type="match status" value="1"/>
</dbReference>
<dbReference type="Gene3D" id="1.10.150.20">
    <property type="entry name" value="5' to 3' exonuclease, C-terminal subdomain"/>
    <property type="match status" value="1"/>
</dbReference>
<dbReference type="Gene3D" id="3.40.140.10">
    <property type="entry name" value="Cytidine Deaminase, domain 2"/>
    <property type="match status" value="1"/>
</dbReference>
<dbReference type="InterPro" id="IPR037518">
    <property type="entry name" value="MPN"/>
</dbReference>
<dbReference type="InterPro" id="IPR025657">
    <property type="entry name" value="RadC_JAB"/>
</dbReference>
<dbReference type="InterPro" id="IPR010994">
    <property type="entry name" value="RuvA_2-like"/>
</dbReference>
<dbReference type="InterPro" id="IPR001405">
    <property type="entry name" value="UPF0758"/>
</dbReference>
<dbReference type="InterPro" id="IPR020891">
    <property type="entry name" value="UPF0758_CS"/>
</dbReference>
<dbReference type="InterPro" id="IPR046778">
    <property type="entry name" value="UPF0758_N"/>
</dbReference>
<dbReference type="NCBIfam" id="NF000642">
    <property type="entry name" value="PRK00024.1"/>
    <property type="match status" value="1"/>
</dbReference>
<dbReference type="NCBIfam" id="TIGR00608">
    <property type="entry name" value="radc"/>
    <property type="match status" value="1"/>
</dbReference>
<dbReference type="PANTHER" id="PTHR30471">
    <property type="entry name" value="DNA REPAIR PROTEIN RADC"/>
    <property type="match status" value="1"/>
</dbReference>
<dbReference type="PANTHER" id="PTHR30471:SF3">
    <property type="entry name" value="UPF0758 PROTEIN YEES-RELATED"/>
    <property type="match status" value="1"/>
</dbReference>
<dbReference type="Pfam" id="PF04002">
    <property type="entry name" value="RadC"/>
    <property type="match status" value="1"/>
</dbReference>
<dbReference type="Pfam" id="PF20582">
    <property type="entry name" value="UPF0758_N"/>
    <property type="match status" value="1"/>
</dbReference>
<dbReference type="SUPFAM" id="SSF102712">
    <property type="entry name" value="JAB1/MPN domain"/>
    <property type="match status" value="1"/>
</dbReference>
<dbReference type="SUPFAM" id="SSF47781">
    <property type="entry name" value="RuvA domain 2-like"/>
    <property type="match status" value="1"/>
</dbReference>
<dbReference type="PROSITE" id="PS50249">
    <property type="entry name" value="MPN"/>
    <property type="match status" value="1"/>
</dbReference>
<dbReference type="PROSITE" id="PS01302">
    <property type="entry name" value="UPF0758"/>
    <property type="match status" value="1"/>
</dbReference>
<reference key="1">
    <citation type="submission" date="2008-04" db="EMBL/GenBank/DDBJ databases">
        <title>Complete sequence of Clostridium botulinum strain Eklund.</title>
        <authorList>
            <person name="Brinkac L.M."/>
            <person name="Brown J.L."/>
            <person name="Bruce D."/>
            <person name="Detter C."/>
            <person name="Munk C."/>
            <person name="Smith L.A."/>
            <person name="Smith T.J."/>
            <person name="Sutton G."/>
            <person name="Brettin T.S."/>
        </authorList>
    </citation>
    <scope>NUCLEOTIDE SEQUENCE [LARGE SCALE GENOMIC DNA]</scope>
    <source>
        <strain>Eklund 17B / Type B</strain>
    </source>
</reference>
<protein>
    <recommendedName>
        <fullName>UPF0758 protein CLL_A0562</fullName>
    </recommendedName>
</protein>
<organism>
    <name type="scientific">Clostridium botulinum (strain Eklund 17B / Type B)</name>
    <dbReference type="NCBI Taxonomy" id="935198"/>
    <lineage>
        <taxon>Bacteria</taxon>
        <taxon>Bacillati</taxon>
        <taxon>Bacillota</taxon>
        <taxon>Clostridia</taxon>
        <taxon>Eubacteriales</taxon>
        <taxon>Clostridiaceae</taxon>
        <taxon>Clostridium</taxon>
    </lineage>
</organism>
<sequence length="229" mass="25435">MENSLKIKDIPKKERPKEKLLSYGADTLNNSELLAIILRTGTKGENVLQLSNRLLSKFQGLDGVLEASLDDITSIKGIKEGKASQILALAELFKRFRTFKSADRDIKIMSPNDLAMLINGEMSLLKQEILKVIFLNTKNIVIGTKDVFKGSLNTSIVHPREIFKEAVNKSSAKIIISHNHPSGDPTPSKEDINITLRIKECGEIMGIQLLDHIIIGKNGFISLKEKGFI</sequence>